<reference key="1">
    <citation type="journal article" date="1992" name="Virology">
        <title>Differences in transforming activity and coded amino acid sequence among E6 genes of several papillomaviruses associated with epidermodysplasia verruciformis.</title>
        <authorList>
            <person name="Kiyono T."/>
            <person name="Hiraiwa A."/>
            <person name="Ishibashi M."/>
        </authorList>
    </citation>
    <scope>NUCLEOTIDE SEQUENCE [GENOMIC DNA]</scope>
</reference>
<reference key="2">
    <citation type="submission" date="1995-10" db="EMBL/GenBank/DDBJ databases">
        <authorList>
            <person name="Delius H."/>
        </authorList>
    </citation>
    <scope>NUCLEOTIDE SEQUENCE [GENOMIC DNA]</scope>
</reference>
<comment type="function">
    <text evidence="1">Plays a major role in the induction and maintenance of cellular transformation. E6 associates with host UBE3A/E6-AP ubiquitin-protein ligase and modulates its activity. Protects host keratinocytes from apoptosis by mediating the degradation of host BAK1. May also inhibit host immune response.</text>
</comment>
<comment type="subunit">
    <text evidence="1">Forms homodimers. Interacts with ubiquitin-protein ligase UBE3A/E6-AP; this interaction stimulates UBE3A ubiquitin activity. Interacts with host BAK1.</text>
</comment>
<comment type="subcellular location">
    <subcellularLocation>
        <location evidence="1">Host cytoplasm</location>
    </subcellularLocation>
    <subcellularLocation>
        <location evidence="1">Host nucleus</location>
    </subcellularLocation>
</comment>
<comment type="similarity">
    <text evidence="1 2">Belongs to the papillomaviridae E6 protein family.</text>
</comment>
<keyword id="KW-0010">Activator</keyword>
<keyword id="KW-0238">DNA-binding</keyword>
<keyword id="KW-0244">Early protein</keyword>
<keyword id="KW-1035">Host cytoplasm</keyword>
<keyword id="KW-1048">Host nucleus</keyword>
<keyword id="KW-0945">Host-virus interaction</keyword>
<keyword id="KW-1090">Inhibition of host innate immune response by virus</keyword>
<keyword id="KW-0479">Metal-binding</keyword>
<keyword id="KW-1119">Modulation of host cell apoptosis by virus</keyword>
<keyword id="KW-0804">Transcription</keyword>
<keyword id="KW-0805">Transcription regulation</keyword>
<keyword id="KW-0899">Viral immunoevasion</keyword>
<keyword id="KW-0862">Zinc</keyword>
<keyword id="KW-0863">Zinc-finger</keyword>
<dbReference type="EMBL" id="D90261">
    <property type="protein sequence ID" value="BAA14308.1"/>
    <property type="molecule type" value="Genomic_DNA"/>
</dbReference>
<dbReference type="EMBL" id="U31778">
    <property type="protein sequence ID" value="AAA79387.1"/>
    <property type="molecule type" value="Genomic_DNA"/>
</dbReference>
<dbReference type="SMR" id="P28831"/>
<dbReference type="Proteomes" id="UP000008230">
    <property type="component" value="Genome"/>
</dbReference>
<dbReference type="GO" id="GO:0030430">
    <property type="term" value="C:host cell cytoplasm"/>
    <property type="evidence" value="ECO:0007669"/>
    <property type="project" value="UniProtKB-SubCell"/>
</dbReference>
<dbReference type="GO" id="GO:0042025">
    <property type="term" value="C:host cell nucleus"/>
    <property type="evidence" value="ECO:0007669"/>
    <property type="project" value="UniProtKB-SubCell"/>
</dbReference>
<dbReference type="GO" id="GO:0003677">
    <property type="term" value="F:DNA binding"/>
    <property type="evidence" value="ECO:0007669"/>
    <property type="project" value="UniProtKB-UniRule"/>
</dbReference>
<dbReference type="GO" id="GO:0008270">
    <property type="term" value="F:zinc ion binding"/>
    <property type="evidence" value="ECO:0007669"/>
    <property type="project" value="UniProtKB-KW"/>
</dbReference>
<dbReference type="GO" id="GO:0006351">
    <property type="term" value="P:DNA-templated transcription"/>
    <property type="evidence" value="ECO:0007669"/>
    <property type="project" value="UniProtKB-UniRule"/>
</dbReference>
<dbReference type="GO" id="GO:0006355">
    <property type="term" value="P:regulation of DNA-templated transcription"/>
    <property type="evidence" value="ECO:0007669"/>
    <property type="project" value="UniProtKB-UniRule"/>
</dbReference>
<dbReference type="GO" id="GO:0052150">
    <property type="term" value="P:symbiont-mediated perturbation of host apoptosis"/>
    <property type="evidence" value="ECO:0007669"/>
    <property type="project" value="UniProtKB-KW"/>
</dbReference>
<dbReference type="GO" id="GO:0039648">
    <property type="term" value="P:symbiont-mediated perturbation of host ubiquitin-like protein modification"/>
    <property type="evidence" value="ECO:0007669"/>
    <property type="project" value="UniProtKB-UniRule"/>
</dbReference>
<dbReference type="GO" id="GO:0052170">
    <property type="term" value="P:symbiont-mediated suppression of host innate immune response"/>
    <property type="evidence" value="ECO:0007669"/>
    <property type="project" value="UniProtKB-KW"/>
</dbReference>
<dbReference type="GO" id="GO:0039502">
    <property type="term" value="P:symbiont-mediated suppression of host type I interferon-mediated signaling pathway"/>
    <property type="evidence" value="ECO:0007669"/>
    <property type="project" value="UniProtKB-UniRule"/>
</dbReference>
<dbReference type="Gene3D" id="3.30.240.40">
    <property type="entry name" value="E6 early regulatory protein"/>
    <property type="match status" value="2"/>
</dbReference>
<dbReference type="HAMAP" id="MF_04006">
    <property type="entry name" value="HPV_E6"/>
    <property type="match status" value="1"/>
</dbReference>
<dbReference type="InterPro" id="IPR001334">
    <property type="entry name" value="E6"/>
</dbReference>
<dbReference type="InterPro" id="IPR038575">
    <property type="entry name" value="E6_sf"/>
</dbReference>
<dbReference type="Pfam" id="PF00518">
    <property type="entry name" value="E6"/>
    <property type="match status" value="1"/>
</dbReference>
<dbReference type="SUPFAM" id="SSF161229">
    <property type="entry name" value="E6 C-terminal domain-like"/>
    <property type="match status" value="2"/>
</dbReference>
<organismHost>
    <name type="scientific">Homo sapiens</name>
    <name type="common">Human</name>
    <dbReference type="NCBI Taxonomy" id="9606"/>
</organismHost>
<feature type="chain" id="PRO_0000133340" description="Protein E6">
    <location>
        <begin position="1"/>
        <end position="165"/>
    </location>
</feature>
<feature type="zinc finger region" evidence="1">
    <location>
        <begin position="52"/>
        <end position="88"/>
    </location>
</feature>
<feature type="zinc finger region" evidence="1">
    <location>
        <begin position="125"/>
        <end position="161"/>
    </location>
</feature>
<feature type="sequence conflict" description="In Ref. 2; AAA79387." evidence="2" ref="2">
    <original>F</original>
    <variation>P</variation>
    <location>
        <position position="23"/>
    </location>
</feature>
<feature type="sequence conflict" description="In Ref. 2; AAA79387." evidence="2" ref="2">
    <original>H</original>
    <variation>D</variation>
    <location>
        <position position="122"/>
    </location>
</feature>
<name>VE6_HPV20</name>
<protein>
    <recommendedName>
        <fullName evidence="1">Protein E6</fullName>
    </recommendedName>
</protein>
<evidence type="ECO:0000255" key="1">
    <source>
        <dbReference type="HAMAP-Rule" id="MF_04006"/>
    </source>
</evidence>
<evidence type="ECO:0000305" key="2"/>
<proteinExistence type="inferred from homology"/>
<accession>P28831</accession>
<sequence length="165" mass="18670">MATPPSSEDSADEGPSNIGEAKFPILEPPLPATICGLAKLLEIPLDDCLIPCNFCGNFLTHLEVCEFDEKKLTLIWKDHLVFACCRVCCSATATYEFNQFYESTVLGRDIEQVTGKSVFDIHVRCYTCMKFLDSIEKLDICGRKRPFYLVRGSWKGICRLCKHFQ</sequence>
<gene>
    <name evidence="1" type="primary">E6</name>
</gene>
<organism>
    <name type="scientific">Human papillomavirus 20</name>
    <dbReference type="NCBI Taxonomy" id="31547"/>
    <lineage>
        <taxon>Viruses</taxon>
        <taxon>Monodnaviria</taxon>
        <taxon>Shotokuvirae</taxon>
        <taxon>Cossaviricota</taxon>
        <taxon>Papovaviricetes</taxon>
        <taxon>Zurhausenvirales</taxon>
        <taxon>Papillomaviridae</taxon>
        <taxon>Firstpapillomavirinae</taxon>
        <taxon>Betapapillomavirus</taxon>
        <taxon>Betapapillomavirus 1</taxon>
    </lineage>
</organism>